<gene>
    <name type="primary">yos1</name>
    <name type="ORF">SPAC19A8.09</name>
</gene>
<organism>
    <name type="scientific">Schizosaccharomyces pombe (strain 972 / ATCC 24843)</name>
    <name type="common">Fission yeast</name>
    <dbReference type="NCBI Taxonomy" id="284812"/>
    <lineage>
        <taxon>Eukaryota</taxon>
        <taxon>Fungi</taxon>
        <taxon>Dikarya</taxon>
        <taxon>Ascomycota</taxon>
        <taxon>Taphrinomycotina</taxon>
        <taxon>Schizosaccharomycetes</taxon>
        <taxon>Schizosaccharomycetales</taxon>
        <taxon>Schizosaccharomycetaceae</taxon>
        <taxon>Schizosaccharomyces</taxon>
    </lineage>
</organism>
<protein>
    <recommendedName>
        <fullName>Protein transport protein yos1</fullName>
    </recommendedName>
</protein>
<comment type="function">
    <text evidence="1">Required for protein transport between endoplasmic reticulum and Golgi apparatus.</text>
</comment>
<comment type="subunit">
    <text evidence="1">Component of the yip1-yif1 complex, composed of at least yif1, yip1 and yos1.</text>
</comment>
<comment type="subcellular location">
    <subcellularLocation>
        <location evidence="1">Endoplasmic reticulum membrane</location>
        <topology evidence="2">Multi-pass membrane protein</topology>
    </subcellularLocation>
    <subcellularLocation>
        <location evidence="1">Golgi apparatus membrane</location>
        <topology evidence="2">Multi-pass membrane protein</topology>
    </subcellularLocation>
</comment>
<comment type="similarity">
    <text evidence="3">Belongs to the YOS1 family.</text>
</comment>
<reference key="1">
    <citation type="journal article" date="2002" name="Nature">
        <title>The genome sequence of Schizosaccharomyces pombe.</title>
        <authorList>
            <person name="Wood V."/>
            <person name="Gwilliam R."/>
            <person name="Rajandream M.A."/>
            <person name="Lyne M.H."/>
            <person name="Lyne R."/>
            <person name="Stewart A."/>
            <person name="Sgouros J.G."/>
            <person name="Peat N."/>
            <person name="Hayles J."/>
            <person name="Baker S.G."/>
            <person name="Basham D."/>
            <person name="Bowman S."/>
            <person name="Brooks K."/>
            <person name="Brown D."/>
            <person name="Brown S."/>
            <person name="Chillingworth T."/>
            <person name="Churcher C.M."/>
            <person name="Collins M."/>
            <person name="Connor R."/>
            <person name="Cronin A."/>
            <person name="Davis P."/>
            <person name="Feltwell T."/>
            <person name="Fraser A."/>
            <person name="Gentles S."/>
            <person name="Goble A."/>
            <person name="Hamlin N."/>
            <person name="Harris D.E."/>
            <person name="Hidalgo J."/>
            <person name="Hodgson G."/>
            <person name="Holroyd S."/>
            <person name="Hornsby T."/>
            <person name="Howarth S."/>
            <person name="Huckle E.J."/>
            <person name="Hunt S."/>
            <person name="Jagels K."/>
            <person name="James K.D."/>
            <person name="Jones L."/>
            <person name="Jones M."/>
            <person name="Leather S."/>
            <person name="McDonald S."/>
            <person name="McLean J."/>
            <person name="Mooney P."/>
            <person name="Moule S."/>
            <person name="Mungall K.L."/>
            <person name="Murphy L.D."/>
            <person name="Niblett D."/>
            <person name="Odell C."/>
            <person name="Oliver K."/>
            <person name="O'Neil S."/>
            <person name="Pearson D."/>
            <person name="Quail M.A."/>
            <person name="Rabbinowitsch E."/>
            <person name="Rutherford K.M."/>
            <person name="Rutter S."/>
            <person name="Saunders D."/>
            <person name="Seeger K."/>
            <person name="Sharp S."/>
            <person name="Skelton J."/>
            <person name="Simmonds M.N."/>
            <person name="Squares R."/>
            <person name="Squares S."/>
            <person name="Stevens K."/>
            <person name="Taylor K."/>
            <person name="Taylor R.G."/>
            <person name="Tivey A."/>
            <person name="Walsh S.V."/>
            <person name="Warren T."/>
            <person name="Whitehead S."/>
            <person name="Woodward J.R."/>
            <person name="Volckaert G."/>
            <person name="Aert R."/>
            <person name="Robben J."/>
            <person name="Grymonprez B."/>
            <person name="Weltjens I."/>
            <person name="Vanstreels E."/>
            <person name="Rieger M."/>
            <person name="Schaefer M."/>
            <person name="Mueller-Auer S."/>
            <person name="Gabel C."/>
            <person name="Fuchs M."/>
            <person name="Duesterhoeft A."/>
            <person name="Fritzc C."/>
            <person name="Holzer E."/>
            <person name="Moestl D."/>
            <person name="Hilbert H."/>
            <person name="Borzym K."/>
            <person name="Langer I."/>
            <person name="Beck A."/>
            <person name="Lehrach H."/>
            <person name="Reinhardt R."/>
            <person name="Pohl T.M."/>
            <person name="Eger P."/>
            <person name="Zimmermann W."/>
            <person name="Wedler H."/>
            <person name="Wambutt R."/>
            <person name="Purnelle B."/>
            <person name="Goffeau A."/>
            <person name="Cadieu E."/>
            <person name="Dreano S."/>
            <person name="Gloux S."/>
            <person name="Lelaure V."/>
            <person name="Mottier S."/>
            <person name="Galibert F."/>
            <person name="Aves S.J."/>
            <person name="Xiang Z."/>
            <person name="Hunt C."/>
            <person name="Moore K."/>
            <person name="Hurst S.M."/>
            <person name="Lucas M."/>
            <person name="Rochet M."/>
            <person name="Gaillardin C."/>
            <person name="Tallada V.A."/>
            <person name="Garzon A."/>
            <person name="Thode G."/>
            <person name="Daga R.R."/>
            <person name="Cruzado L."/>
            <person name="Jimenez J."/>
            <person name="Sanchez M."/>
            <person name="del Rey F."/>
            <person name="Benito J."/>
            <person name="Dominguez A."/>
            <person name="Revuelta J.L."/>
            <person name="Moreno S."/>
            <person name="Armstrong J."/>
            <person name="Forsburg S.L."/>
            <person name="Cerutti L."/>
            <person name="Lowe T."/>
            <person name="McCombie W.R."/>
            <person name="Paulsen I."/>
            <person name="Potashkin J."/>
            <person name="Shpakovski G.V."/>
            <person name="Ussery D."/>
            <person name="Barrell B.G."/>
            <person name="Nurse P."/>
        </authorList>
    </citation>
    <scope>NUCLEOTIDE SEQUENCE [LARGE SCALE GENOMIC DNA]</scope>
    <source>
        <strain>972 / ATCC 24843</strain>
    </source>
</reference>
<evidence type="ECO:0000250" key="1">
    <source>
        <dbReference type="UniProtKB" id="Q3E834"/>
    </source>
</evidence>
<evidence type="ECO:0000255" key="2"/>
<evidence type="ECO:0000305" key="3"/>
<keyword id="KW-0256">Endoplasmic reticulum</keyword>
<keyword id="KW-0931">ER-Golgi transport</keyword>
<keyword id="KW-0333">Golgi apparatus</keyword>
<keyword id="KW-0472">Membrane</keyword>
<keyword id="KW-0653">Protein transport</keyword>
<keyword id="KW-1185">Reference proteome</keyword>
<keyword id="KW-0812">Transmembrane</keyword>
<keyword id="KW-1133">Transmembrane helix</keyword>
<keyword id="KW-0813">Transport</keyword>
<feature type="chain" id="PRO_0000116716" description="Protein transport protein yos1">
    <location>
        <begin position="1"/>
        <end position="81"/>
    </location>
</feature>
<feature type="transmembrane region" description="Helical" evidence="2">
    <location>
        <begin position="1"/>
        <end position="21"/>
    </location>
</feature>
<feature type="transmembrane region" description="Helical" evidence="2">
    <location>
        <begin position="61"/>
        <end position="81"/>
    </location>
</feature>
<name>YOS1_SCHPO</name>
<accession>O13825</accession>
<proteinExistence type="inferred from homology"/>
<sequence>MFGFGNILYVTLLLLNAVAILSEDRFLGRIGWSQSAALGFGDRQDTIKSRILHLIRAIRTVMTFPLIAINTIVIVYNLVLG</sequence>
<dbReference type="EMBL" id="CU329670">
    <property type="protein sequence ID" value="CAB11645.1"/>
    <property type="molecule type" value="Genomic_DNA"/>
</dbReference>
<dbReference type="PIR" id="T37952">
    <property type="entry name" value="T37952"/>
</dbReference>
<dbReference type="RefSeq" id="NP_593783.1">
    <property type="nucleotide sequence ID" value="NM_001019212.2"/>
</dbReference>
<dbReference type="SMR" id="O13825"/>
<dbReference type="BioGRID" id="278689">
    <property type="interactions" value="2"/>
</dbReference>
<dbReference type="FunCoup" id="O13825">
    <property type="interactions" value="198"/>
</dbReference>
<dbReference type="STRING" id="284812.O13825"/>
<dbReference type="PaxDb" id="4896-SPAC19A8.09.1"/>
<dbReference type="EnsemblFungi" id="SPAC19A8.09.1">
    <property type="protein sequence ID" value="SPAC19A8.09.1:pep"/>
    <property type="gene ID" value="SPAC19A8.09"/>
</dbReference>
<dbReference type="GeneID" id="2542215"/>
<dbReference type="KEGG" id="spo:2542215"/>
<dbReference type="PomBase" id="SPAC19A8.09">
    <property type="gene designation" value="yos1"/>
</dbReference>
<dbReference type="VEuPathDB" id="FungiDB:SPAC19A8.09"/>
<dbReference type="eggNOG" id="KOG4779">
    <property type="taxonomic scope" value="Eukaryota"/>
</dbReference>
<dbReference type="HOGENOM" id="CLU_152125_0_0_1"/>
<dbReference type="InParanoid" id="O13825"/>
<dbReference type="OMA" id="VQTVMRM"/>
<dbReference type="PhylomeDB" id="O13825"/>
<dbReference type="PRO" id="PR:O13825"/>
<dbReference type="Proteomes" id="UP000002485">
    <property type="component" value="Chromosome I"/>
</dbReference>
<dbReference type="GO" id="GO:0030134">
    <property type="term" value="C:COPII-coated ER to Golgi transport vesicle"/>
    <property type="evidence" value="ECO:0000318"/>
    <property type="project" value="GO_Central"/>
</dbReference>
<dbReference type="GO" id="GO:0005783">
    <property type="term" value="C:endoplasmic reticulum"/>
    <property type="evidence" value="ECO:0007005"/>
    <property type="project" value="PomBase"/>
</dbReference>
<dbReference type="GO" id="GO:0005789">
    <property type="term" value="C:endoplasmic reticulum membrane"/>
    <property type="evidence" value="ECO:0000318"/>
    <property type="project" value="GO_Central"/>
</dbReference>
<dbReference type="GO" id="GO:0000139">
    <property type="term" value="C:Golgi membrane"/>
    <property type="evidence" value="ECO:0000318"/>
    <property type="project" value="GO_Central"/>
</dbReference>
<dbReference type="GO" id="GO:0006888">
    <property type="term" value="P:endoplasmic reticulum to Golgi vesicle-mediated transport"/>
    <property type="evidence" value="ECO:0000318"/>
    <property type="project" value="GO_Central"/>
</dbReference>
<dbReference type="GO" id="GO:0006886">
    <property type="term" value="P:intracellular protein transport"/>
    <property type="evidence" value="ECO:0000303"/>
    <property type="project" value="PomBase"/>
</dbReference>
<dbReference type="InterPro" id="IPR013880">
    <property type="entry name" value="Yos1"/>
</dbReference>
<dbReference type="PANTHER" id="PTHR15858">
    <property type="entry name" value="IMMEDIATE EARLY RESPONSE 3-INTERACTING PROTEIN 1"/>
    <property type="match status" value="1"/>
</dbReference>
<dbReference type="PANTHER" id="PTHR15858:SF0">
    <property type="entry name" value="IMMEDIATE EARLY RESPONSE 3-INTERACTING PROTEIN 1"/>
    <property type="match status" value="1"/>
</dbReference>
<dbReference type="Pfam" id="PF08571">
    <property type="entry name" value="Yos1"/>
    <property type="match status" value="1"/>
</dbReference>